<gene>
    <name evidence="1" type="primary">mutS</name>
    <name type="ordered locus">CBUD_0986</name>
</gene>
<organism>
    <name type="scientific">Coxiella burnetii (strain Dugway 5J108-111)</name>
    <dbReference type="NCBI Taxonomy" id="434922"/>
    <lineage>
        <taxon>Bacteria</taxon>
        <taxon>Pseudomonadati</taxon>
        <taxon>Pseudomonadota</taxon>
        <taxon>Gammaproteobacteria</taxon>
        <taxon>Legionellales</taxon>
        <taxon>Coxiellaceae</taxon>
        <taxon>Coxiella</taxon>
    </lineage>
</organism>
<evidence type="ECO:0000255" key="1">
    <source>
        <dbReference type="HAMAP-Rule" id="MF_00096"/>
    </source>
</evidence>
<evidence type="ECO:0000305" key="2"/>
<proteinExistence type="inferred from homology"/>
<reference key="1">
    <citation type="journal article" date="2009" name="Infect. Immun.">
        <title>Comparative genomics reveal extensive transposon-mediated genomic plasticity and diversity among potential effector proteins within the genus Coxiella.</title>
        <authorList>
            <person name="Beare P.A."/>
            <person name="Unsworth N."/>
            <person name="Andoh M."/>
            <person name="Voth D.E."/>
            <person name="Omsland A."/>
            <person name="Gilk S.D."/>
            <person name="Williams K.P."/>
            <person name="Sobral B.W."/>
            <person name="Kupko J.J. III"/>
            <person name="Porcella S.F."/>
            <person name="Samuel J.E."/>
            <person name="Heinzen R.A."/>
        </authorList>
    </citation>
    <scope>NUCLEOTIDE SEQUENCE [LARGE SCALE GENOMIC DNA]</scope>
    <source>
        <strain>Dugway 5J108-111</strain>
    </source>
</reference>
<sequence length="859" mass="97319">MELQTKSPTTQNDFSQHTPMMRQYLRIKAEYPDLLVFYRMGDFYELFYDDAKKAAKLLNITLTARGQSAGHAIPMAGVPYHAVENYLTKLVRLGESVVICEQIGDPATSKGPVAREVTRIITPGTVSDEALLDEHRDNTLMVIHQEKDRFGIATLDITSGRFLIQEIISENALFAEIERIRPAELLISEENSVHPLKADSIKRRPPWEFDHATALTLLCQQFQTKSLDGFGITHLPLAITAAGCLLQYVNYTQKSALPHIHSIQAEQNEEALFIDANTRRNLELITNLQGEEVHSLAWLLDHTATPMGSRLLRRWINRPLRDQILLQQRQNAVSTLLEKRNYSEIYENLRHIGDLERIVARIALRSARPRDLMQLRQALGVLPTLHQQLTNLPLNKQLQEIKNNLGLFDELFRLLQKAIIENPPIVIRDGGVIADGYDAPLDELRNMSTNSHQFLIDLEQQERERTKINTLKVGYNRIHGYYIEISRAQAKQAPTEYIRRQTLKNVERYITPELKIFEDKVLSSRSRALAREKELYEQLLDTLIEKLIPLQQCASAIANLDVLNTLAERADTLNFNAPQFCDYPIIKIEAGRHPIVENVMTDPFMPNDTHLDEKRRMLIITGPNMGGKSTYMRQTALITLLAYIGSFVPAKNAQLGPIDRIFTRIGAADDLASGRSTFMVEMTETAAILHNATEESLVLMDEVGRGTSTFDGLSLAYACASYLATKLKAFALFATHYFELTALASTLPAVKNVHLDAVEHEEKIIFLHALREGPANKSYGLQVAQLAGIPRSVIQHARQKLEELENPVISETQQPQQNELFLPIENPVLTQLDKLNPDNLTPKQALDILYQLIQLRQQK</sequence>
<accession>A9KG24</accession>
<keyword id="KW-0067">ATP-binding</keyword>
<keyword id="KW-0227">DNA damage</keyword>
<keyword id="KW-0234">DNA repair</keyword>
<keyword id="KW-0238">DNA-binding</keyword>
<keyword id="KW-0547">Nucleotide-binding</keyword>
<name>MUTS_COXBN</name>
<comment type="function">
    <text evidence="1">This protein is involved in the repair of mismatches in DNA. It is possible that it carries out the mismatch recognition step. This protein has a weak ATPase activity.</text>
</comment>
<comment type="similarity">
    <text evidence="1">Belongs to the DNA mismatch repair MutS family.</text>
</comment>
<comment type="sequence caution" evidence="2">
    <conflict type="erroneous initiation">
        <sequence resource="EMBL-CDS" id="ABS76827"/>
    </conflict>
</comment>
<feature type="chain" id="PRO_0000335144" description="DNA mismatch repair protein MutS">
    <location>
        <begin position="1"/>
        <end position="859"/>
    </location>
</feature>
<feature type="binding site" evidence="1">
    <location>
        <begin position="622"/>
        <end position="629"/>
    </location>
    <ligand>
        <name>ATP</name>
        <dbReference type="ChEBI" id="CHEBI:30616"/>
    </ligand>
</feature>
<dbReference type="EMBL" id="CP000733">
    <property type="protein sequence ID" value="ABS76827.2"/>
    <property type="status" value="ALT_INIT"/>
    <property type="molecule type" value="Genomic_DNA"/>
</dbReference>
<dbReference type="SMR" id="A9KG24"/>
<dbReference type="KEGG" id="cbd:CBUD_0986"/>
<dbReference type="HOGENOM" id="CLU_002472_4_0_6"/>
<dbReference type="Proteomes" id="UP000008555">
    <property type="component" value="Chromosome"/>
</dbReference>
<dbReference type="GO" id="GO:0005829">
    <property type="term" value="C:cytosol"/>
    <property type="evidence" value="ECO:0007669"/>
    <property type="project" value="TreeGrafter"/>
</dbReference>
<dbReference type="GO" id="GO:0005524">
    <property type="term" value="F:ATP binding"/>
    <property type="evidence" value="ECO:0007669"/>
    <property type="project" value="UniProtKB-UniRule"/>
</dbReference>
<dbReference type="GO" id="GO:0140664">
    <property type="term" value="F:ATP-dependent DNA damage sensor activity"/>
    <property type="evidence" value="ECO:0007669"/>
    <property type="project" value="InterPro"/>
</dbReference>
<dbReference type="GO" id="GO:0003684">
    <property type="term" value="F:damaged DNA binding"/>
    <property type="evidence" value="ECO:0007669"/>
    <property type="project" value="UniProtKB-UniRule"/>
</dbReference>
<dbReference type="GO" id="GO:0030983">
    <property type="term" value="F:mismatched DNA binding"/>
    <property type="evidence" value="ECO:0007669"/>
    <property type="project" value="InterPro"/>
</dbReference>
<dbReference type="GO" id="GO:0006298">
    <property type="term" value="P:mismatch repair"/>
    <property type="evidence" value="ECO:0007669"/>
    <property type="project" value="UniProtKB-UniRule"/>
</dbReference>
<dbReference type="CDD" id="cd03284">
    <property type="entry name" value="ABC_MutS1"/>
    <property type="match status" value="1"/>
</dbReference>
<dbReference type="FunFam" id="1.10.1420.10:FF:000002">
    <property type="entry name" value="DNA mismatch repair protein MutS"/>
    <property type="match status" value="1"/>
</dbReference>
<dbReference type="FunFam" id="3.40.1170.10:FF:000001">
    <property type="entry name" value="DNA mismatch repair protein MutS"/>
    <property type="match status" value="1"/>
</dbReference>
<dbReference type="FunFam" id="3.40.50.300:FF:000283">
    <property type="entry name" value="DNA mismatch repair protein MutS"/>
    <property type="match status" value="1"/>
</dbReference>
<dbReference type="Gene3D" id="1.10.1420.10">
    <property type="match status" value="2"/>
</dbReference>
<dbReference type="Gene3D" id="6.10.140.430">
    <property type="match status" value="1"/>
</dbReference>
<dbReference type="Gene3D" id="3.40.1170.10">
    <property type="entry name" value="DNA repair protein MutS, domain I"/>
    <property type="match status" value="1"/>
</dbReference>
<dbReference type="Gene3D" id="3.30.420.110">
    <property type="entry name" value="MutS, connector domain"/>
    <property type="match status" value="1"/>
</dbReference>
<dbReference type="Gene3D" id="3.40.50.300">
    <property type="entry name" value="P-loop containing nucleotide triphosphate hydrolases"/>
    <property type="match status" value="1"/>
</dbReference>
<dbReference type="HAMAP" id="MF_00096">
    <property type="entry name" value="MutS"/>
    <property type="match status" value="1"/>
</dbReference>
<dbReference type="InterPro" id="IPR005748">
    <property type="entry name" value="DNA_mismatch_repair_MutS"/>
</dbReference>
<dbReference type="InterPro" id="IPR007695">
    <property type="entry name" value="DNA_mismatch_repair_MutS-lik_N"/>
</dbReference>
<dbReference type="InterPro" id="IPR017261">
    <property type="entry name" value="DNA_mismatch_repair_MutS/MSH"/>
</dbReference>
<dbReference type="InterPro" id="IPR000432">
    <property type="entry name" value="DNA_mismatch_repair_MutS_C"/>
</dbReference>
<dbReference type="InterPro" id="IPR007861">
    <property type="entry name" value="DNA_mismatch_repair_MutS_clamp"/>
</dbReference>
<dbReference type="InterPro" id="IPR007696">
    <property type="entry name" value="DNA_mismatch_repair_MutS_core"/>
</dbReference>
<dbReference type="InterPro" id="IPR016151">
    <property type="entry name" value="DNA_mismatch_repair_MutS_N"/>
</dbReference>
<dbReference type="InterPro" id="IPR036187">
    <property type="entry name" value="DNA_mismatch_repair_MutS_sf"/>
</dbReference>
<dbReference type="InterPro" id="IPR007860">
    <property type="entry name" value="DNA_mmatch_repair_MutS_con_dom"/>
</dbReference>
<dbReference type="InterPro" id="IPR045076">
    <property type="entry name" value="MutS"/>
</dbReference>
<dbReference type="InterPro" id="IPR036678">
    <property type="entry name" value="MutS_con_dom_sf"/>
</dbReference>
<dbReference type="InterPro" id="IPR027417">
    <property type="entry name" value="P-loop_NTPase"/>
</dbReference>
<dbReference type="NCBIfam" id="TIGR01070">
    <property type="entry name" value="mutS1"/>
    <property type="match status" value="1"/>
</dbReference>
<dbReference type="NCBIfam" id="NF003810">
    <property type="entry name" value="PRK05399.1"/>
    <property type="match status" value="1"/>
</dbReference>
<dbReference type="PANTHER" id="PTHR11361:SF34">
    <property type="entry name" value="DNA MISMATCH REPAIR PROTEIN MSH1, MITOCHONDRIAL"/>
    <property type="match status" value="1"/>
</dbReference>
<dbReference type="PANTHER" id="PTHR11361">
    <property type="entry name" value="DNA MISMATCH REPAIR PROTEIN MUTS FAMILY MEMBER"/>
    <property type="match status" value="1"/>
</dbReference>
<dbReference type="Pfam" id="PF01624">
    <property type="entry name" value="MutS_I"/>
    <property type="match status" value="1"/>
</dbReference>
<dbReference type="Pfam" id="PF05188">
    <property type="entry name" value="MutS_II"/>
    <property type="match status" value="1"/>
</dbReference>
<dbReference type="Pfam" id="PF05192">
    <property type="entry name" value="MutS_III"/>
    <property type="match status" value="1"/>
</dbReference>
<dbReference type="Pfam" id="PF05190">
    <property type="entry name" value="MutS_IV"/>
    <property type="match status" value="1"/>
</dbReference>
<dbReference type="Pfam" id="PF00488">
    <property type="entry name" value="MutS_V"/>
    <property type="match status" value="1"/>
</dbReference>
<dbReference type="PIRSF" id="PIRSF037677">
    <property type="entry name" value="DNA_mis_repair_Msh6"/>
    <property type="match status" value="1"/>
</dbReference>
<dbReference type="SMART" id="SM00534">
    <property type="entry name" value="MUTSac"/>
    <property type="match status" value="1"/>
</dbReference>
<dbReference type="SMART" id="SM00533">
    <property type="entry name" value="MUTSd"/>
    <property type="match status" value="1"/>
</dbReference>
<dbReference type="SUPFAM" id="SSF55271">
    <property type="entry name" value="DNA repair protein MutS, domain I"/>
    <property type="match status" value="1"/>
</dbReference>
<dbReference type="SUPFAM" id="SSF53150">
    <property type="entry name" value="DNA repair protein MutS, domain II"/>
    <property type="match status" value="1"/>
</dbReference>
<dbReference type="SUPFAM" id="SSF48334">
    <property type="entry name" value="DNA repair protein MutS, domain III"/>
    <property type="match status" value="1"/>
</dbReference>
<dbReference type="SUPFAM" id="SSF52540">
    <property type="entry name" value="P-loop containing nucleoside triphosphate hydrolases"/>
    <property type="match status" value="1"/>
</dbReference>
<dbReference type="PROSITE" id="PS00486">
    <property type="entry name" value="DNA_MISMATCH_REPAIR_2"/>
    <property type="match status" value="1"/>
</dbReference>
<protein>
    <recommendedName>
        <fullName evidence="1">DNA mismatch repair protein MutS</fullName>
    </recommendedName>
</protein>